<protein>
    <recommendedName>
        <fullName evidence="1">Inner capsid protein VP2</fullName>
    </recommendedName>
</protein>
<dbReference type="EMBL" id="DQ490536">
    <property type="protein sequence ID" value="ABF67543.1"/>
    <property type="molecule type" value="Genomic_RNA"/>
</dbReference>
<dbReference type="SMR" id="A4ZCW5"/>
<dbReference type="Proteomes" id="UP000001454">
    <property type="component" value="Genome"/>
</dbReference>
<dbReference type="GO" id="GO:0039616">
    <property type="term" value="C:T=2 icosahedral viral capsid"/>
    <property type="evidence" value="ECO:0007669"/>
    <property type="project" value="UniProtKB-UniRule"/>
</dbReference>
<dbReference type="GO" id="GO:0039625">
    <property type="term" value="C:viral inner capsid"/>
    <property type="evidence" value="ECO:0007669"/>
    <property type="project" value="UniProtKB-UniRule"/>
</dbReference>
<dbReference type="GO" id="GO:0019013">
    <property type="term" value="C:viral nucleocapsid"/>
    <property type="evidence" value="ECO:0007669"/>
    <property type="project" value="UniProtKB-UniRule"/>
</dbReference>
<dbReference type="GO" id="GO:0003723">
    <property type="term" value="F:RNA binding"/>
    <property type="evidence" value="ECO:0007669"/>
    <property type="project" value="UniProtKB-UniRule"/>
</dbReference>
<dbReference type="HAMAP" id="MF_04123">
    <property type="entry name" value="Rota_VP2"/>
    <property type="match status" value="1"/>
</dbReference>
<dbReference type="HAMAP" id="MF_04127">
    <property type="entry name" value="Rota_VP2_A"/>
    <property type="match status" value="1"/>
</dbReference>
<dbReference type="InterPro" id="IPR007779">
    <property type="entry name" value="Rotavirus_VP2"/>
</dbReference>
<dbReference type="Pfam" id="PF05087">
    <property type="entry name" value="Rota_VP2"/>
    <property type="match status" value="1"/>
</dbReference>
<feature type="chain" id="PRO_0000368056" description="Inner capsid protein VP2">
    <location>
        <begin position="1"/>
        <end position="887"/>
    </location>
</feature>
<feature type="region of interest" description="5-fold hub; involved in the encapsidation of VP1 and VP3" evidence="1">
    <location>
        <begin position="1"/>
        <end position="87"/>
    </location>
</feature>
<feature type="region of interest" description="Disordered" evidence="2">
    <location>
        <begin position="1"/>
        <end position="43"/>
    </location>
</feature>
<feature type="region of interest" description="Hydrophobic" evidence="1">
    <location>
        <begin position="401"/>
        <end position="421"/>
    </location>
</feature>
<feature type="region of interest" description="Hydrophobic" evidence="1">
    <location>
        <begin position="429"/>
        <end position="449"/>
    </location>
</feature>
<feature type="compositionally biased region" description="Basic and acidic residues" evidence="2">
    <location>
        <begin position="9"/>
        <end position="27"/>
    </location>
</feature>
<feature type="compositionally biased region" description="Polar residues" evidence="2">
    <location>
        <begin position="28"/>
        <end position="43"/>
    </location>
</feature>
<feature type="site" description="Interaction with the intermediate capsid protein VP6" evidence="1">
    <location>
        <position position="231"/>
    </location>
</feature>
<feature type="site" description="Interaction with the intermediate capsid protein VP6" evidence="1">
    <location>
        <position position="235"/>
    </location>
</feature>
<feature type="site" description="Interaction with the intermediate capsid protein VP6" evidence="1">
    <location>
        <position position="846"/>
    </location>
</feature>
<feature type="site" description="Interaction with the intermediate capsid protein VP6" evidence="1">
    <location>
        <position position="848"/>
    </location>
</feature>
<comment type="function">
    <text evidence="1">Inner capsid protein that self-assembles to form an icosahedral capsid with a T=2 symmetry, which consists of 120 copies of VP2, with channels at each of its five-fold vertices. This capsid constitutes the innermost concentric layer of the viral mature particle. It encapsidates the polymerase VP1, the capping enzyme VP3 and the genomic dsRNA, thereby defining the core. The innermost VP2 capsid and the intermediate VP6 capsid remain intact following cell entry to protect the dsRNA from degradation and to prevent unfavorable antiviral responses in the host cell during all the replication cycle of the virus. Nascent transcripts are transcribed within the structural confines of this double-layered particle (DLP) and are extruded through the channels formed by VP2 N-termini. VP2 is required for the replicase activity of VP1 polymerase. Probably recruits a copy of a VP1-VP3 complex, potentially along with a segment of plus-strand RNA, as a decamer of VP2 assembles. May activate the autoinhibited VP1/RNA complex to coordinate packaging and genome replication.</text>
</comment>
<comment type="subunit">
    <text evidence="1">Homodecamer; each decamer is made up of two conformers of VP2, called VP2A and VP2B. Interacts with a VP1-VP3 complex. Interacts with the intermediate capsid protein VP6. Interacts with NSP5. Interacts (via N-terminus) with NSP2.</text>
</comment>
<comment type="subcellular location">
    <subcellularLocation>
        <location evidence="1">Virion</location>
    </subcellularLocation>
    <text evidence="1">Inner capsid protein. Also found in spherical cytoplasmic structures, called virus factories, that appear early after infection and are the site of viral replication and packaging.</text>
</comment>
<comment type="domain">
    <text evidence="1">The N-terminus binds RNA. It is necessary for encapsidation of VP1 and VP3. The N-termini of 10 VP2 molecules form a cylindrical hub underneath each 5-fold axis of the inner capsid.</text>
</comment>
<comment type="PTM">
    <text evidence="1">Sumoylated with SUMO1 and SUMO2. Sumoylation of viral proteins seems to have a positive role on viral replication.</text>
</comment>
<comment type="similarity">
    <text evidence="1">Belongs to the rotavirus VP2 family.</text>
</comment>
<evidence type="ECO:0000255" key="1">
    <source>
        <dbReference type="HAMAP-Rule" id="MF_04127"/>
    </source>
</evidence>
<evidence type="ECO:0000256" key="2">
    <source>
        <dbReference type="SAM" id="MobiDB-lite"/>
    </source>
</evidence>
<name>VP2_ROTH3</name>
<sequence length="887" mass="103235">MAYRKRGARRETNLKQDDRMQEKEENKSTNSVIENKNGTKTQLSEKVLSQKEEVITDNQEETRIADEVKKSNKEESKQLLEVLKTKEEHQKEVQYEILQKTIPTFEPKESILKKLEDIKPEQAKKQTKLFRIFEPKQLPIYRANGEKELRNRWYWKLKRDTLPDGDYDVREYFLNLYDQVLTEMPDYLLLKDMAVENKNSRDAGKVVDSETAAICDAIFQDEETEGVVRRFIAEMRQRVQADQNVVNYPSILHPIDHAFNEYFLQHQLVEPLNNDIIFNYIPERIRNDVNYILNMDRNLPSTARYIRPNLLQDRLNLHDNFESLWDTITTSNYILARSVVPDLKELVSTEAQIQKMSQDLQLEALTIQSETQFLTGINSQAANDCFKTLIAAMLSQRTMSLDFVTTNYMSLISGMWLLTVIPNDMFIRESLVACQLAIINTIIYPAFGMQRMHYRNGDPQTPFQIAEQQIQNFQVANWLHFVNNNQFRQVIIDGVLNQVLNDNIRNGHVVNQLMEALMQLSRQQFPTMPVDYKRSIQRGILLLSNRLGQLVDLTRLLAYNYETLMACITMNMQHVQTLTTEKLQLTSVTSLCMLIGNATVIPSPQTLFHYYNVNVNFHSNYNERINDAVAIITAANRLNLYQKKMKSIVEDFLKRLQIFDVSRVPDDQMYRLRDRLRLLPVEIRRLDIFNLILMNMEQIERASDKIAQGVIIAYRDMQLERDEMYGYVNIARNLDGFQQINLEELMRTGDYAQITNMLLNNQPVALVGALPFITDSSVISLIAKLDATVFAQIVKLRKVDTLKPILYKINSDSNDFYLVANYDWVPTSTTKVYKQVPQQFDFRASMHMLTSNLTFTVYSDLLAFVSADTVEPINAVAFDNMRIMNEL</sequence>
<proteinExistence type="inferred from homology"/>
<reference key="1">
    <citation type="journal article" date="2008" name="J. Virol.">
        <title>Full genome-based classification of rotaviruses reveals a common origin between human Wa-Like and porcine rotavirus strains and human DS-1-like and bovine rotavirus strains.</title>
        <authorList>
            <person name="Matthijnssens J."/>
            <person name="Ciarlet M."/>
            <person name="Heiman E.M."/>
            <person name="Arijs I."/>
            <person name="Delbeke T."/>
            <person name="McDonald S.M."/>
            <person name="Palombo E.A."/>
            <person name="Iturriza-Gomara M."/>
            <person name="Maes P."/>
            <person name="Patton J.T."/>
            <person name="Rahman M."/>
            <person name="Van Ranst M."/>
        </authorList>
    </citation>
    <scope>NUCLEOTIDE SEQUENCE [GENOMIC RNA]</scope>
</reference>
<organismHost>
    <name type="scientific">Homo sapiens</name>
    <name type="common">Human</name>
    <dbReference type="NCBI Taxonomy" id="9606"/>
</organismHost>
<organism>
    <name type="scientific">Rotavirus A (strain RVA/Human/Japan/AU-1/1982/G3P3[9])</name>
    <name type="common">RV-A</name>
    <dbReference type="NCBI Taxonomy" id="39013"/>
    <lineage>
        <taxon>Viruses</taxon>
        <taxon>Riboviria</taxon>
        <taxon>Orthornavirae</taxon>
        <taxon>Duplornaviricota</taxon>
        <taxon>Resentoviricetes</taxon>
        <taxon>Reovirales</taxon>
        <taxon>Sedoreoviridae</taxon>
        <taxon>Rotavirus</taxon>
        <taxon>Rotavirus A</taxon>
    </lineage>
</organism>
<keyword id="KW-0167">Capsid protein</keyword>
<keyword id="KW-1153">Inner capsid protein</keyword>
<keyword id="KW-0677">Repeat</keyword>
<keyword id="KW-0694">RNA-binding</keyword>
<keyword id="KW-1141">T=2 icosahedral capsid protein</keyword>
<keyword id="KW-0832">Ubl conjugation</keyword>
<keyword id="KW-0946">Virion</keyword>
<accession>A4ZCW5</accession>